<organism>
    <name type="scientific">Streptococcus pyogenes serotype M28 (strain MGAS6180)</name>
    <dbReference type="NCBI Taxonomy" id="319701"/>
    <lineage>
        <taxon>Bacteria</taxon>
        <taxon>Bacillati</taxon>
        <taxon>Bacillota</taxon>
        <taxon>Bacilli</taxon>
        <taxon>Lactobacillales</taxon>
        <taxon>Streptococcaceae</taxon>
        <taxon>Streptococcus</taxon>
    </lineage>
</organism>
<sequence>MKIDILTLFPEMFAPLEHSIVGKAKEKGLLDIHYHNFRDYAEKARHVDDEPYGGGQGMLLRAQPIFDTIEQIEAKKPRIILLDPAGKPFTQAYAEELALEEELIFICGHYEGYDERIKTLVTDEISLGDFVLTGGELAAMTMVDATVRLIPQVLGKESSHQDDSFSSGLLEYPQYTRPYDYRGMTVPDVLMSGHHERIRLWRLEESLRKTYLRRPDLLERYDFSEEERKLLDKIKEALGQGED</sequence>
<comment type="function">
    <text evidence="1">Specifically methylates guanosine-37 in various tRNAs.</text>
</comment>
<comment type="catalytic activity">
    <reaction evidence="1">
        <text>guanosine(37) in tRNA + S-adenosyl-L-methionine = N(1)-methylguanosine(37) in tRNA + S-adenosyl-L-homocysteine + H(+)</text>
        <dbReference type="Rhea" id="RHEA:36899"/>
        <dbReference type="Rhea" id="RHEA-COMP:10145"/>
        <dbReference type="Rhea" id="RHEA-COMP:10147"/>
        <dbReference type="ChEBI" id="CHEBI:15378"/>
        <dbReference type="ChEBI" id="CHEBI:57856"/>
        <dbReference type="ChEBI" id="CHEBI:59789"/>
        <dbReference type="ChEBI" id="CHEBI:73542"/>
        <dbReference type="ChEBI" id="CHEBI:74269"/>
        <dbReference type="EC" id="2.1.1.228"/>
    </reaction>
</comment>
<comment type="subunit">
    <text evidence="1">Homodimer.</text>
</comment>
<comment type="subcellular location">
    <subcellularLocation>
        <location evidence="1">Cytoplasm</location>
    </subcellularLocation>
</comment>
<comment type="similarity">
    <text evidence="1">Belongs to the RNA methyltransferase TrmD family.</text>
</comment>
<evidence type="ECO:0000255" key="1">
    <source>
        <dbReference type="HAMAP-Rule" id="MF_00605"/>
    </source>
</evidence>
<keyword id="KW-0963">Cytoplasm</keyword>
<keyword id="KW-0489">Methyltransferase</keyword>
<keyword id="KW-0949">S-adenosyl-L-methionine</keyword>
<keyword id="KW-0808">Transferase</keyword>
<keyword id="KW-0819">tRNA processing</keyword>
<gene>
    <name evidence="1" type="primary">trmD</name>
    <name type="ordered locus">M28_Spy0637</name>
</gene>
<feature type="chain" id="PRO_0000257480" description="tRNA (guanine-N(1)-)-methyltransferase">
    <location>
        <begin position="1"/>
        <end position="243"/>
    </location>
</feature>
<feature type="binding site" evidence="1">
    <location>
        <position position="108"/>
    </location>
    <ligand>
        <name>S-adenosyl-L-methionine</name>
        <dbReference type="ChEBI" id="CHEBI:59789"/>
    </ligand>
</feature>
<feature type="binding site" evidence="1">
    <location>
        <begin position="127"/>
        <end position="132"/>
    </location>
    <ligand>
        <name>S-adenosyl-L-methionine</name>
        <dbReference type="ChEBI" id="CHEBI:59789"/>
    </ligand>
</feature>
<proteinExistence type="inferred from homology"/>
<dbReference type="EC" id="2.1.1.228" evidence="1"/>
<dbReference type="EMBL" id="CP000056">
    <property type="protein sequence ID" value="AAX71751.1"/>
    <property type="molecule type" value="Genomic_DNA"/>
</dbReference>
<dbReference type="RefSeq" id="WP_002985053.1">
    <property type="nucleotide sequence ID" value="NC_007296.2"/>
</dbReference>
<dbReference type="SMR" id="Q48U55"/>
<dbReference type="GeneID" id="69901041"/>
<dbReference type="KEGG" id="spb:M28_Spy0637"/>
<dbReference type="HOGENOM" id="CLU_047363_0_1_9"/>
<dbReference type="GO" id="GO:0005829">
    <property type="term" value="C:cytosol"/>
    <property type="evidence" value="ECO:0007669"/>
    <property type="project" value="TreeGrafter"/>
</dbReference>
<dbReference type="GO" id="GO:0052906">
    <property type="term" value="F:tRNA (guanine(37)-N1)-methyltransferase activity"/>
    <property type="evidence" value="ECO:0007669"/>
    <property type="project" value="UniProtKB-UniRule"/>
</dbReference>
<dbReference type="GO" id="GO:0002939">
    <property type="term" value="P:tRNA N1-guanine methylation"/>
    <property type="evidence" value="ECO:0007669"/>
    <property type="project" value="TreeGrafter"/>
</dbReference>
<dbReference type="CDD" id="cd18080">
    <property type="entry name" value="TrmD-like"/>
    <property type="match status" value="1"/>
</dbReference>
<dbReference type="FunFam" id="1.10.1270.20:FF:000001">
    <property type="entry name" value="tRNA (guanine-N(1)-)-methyltransferase"/>
    <property type="match status" value="1"/>
</dbReference>
<dbReference type="FunFam" id="3.40.1280.10:FF:000001">
    <property type="entry name" value="tRNA (guanine-N(1)-)-methyltransferase"/>
    <property type="match status" value="1"/>
</dbReference>
<dbReference type="Gene3D" id="3.40.1280.10">
    <property type="match status" value="1"/>
</dbReference>
<dbReference type="Gene3D" id="1.10.1270.20">
    <property type="entry name" value="tRNA(m1g37)methyltransferase, domain 2"/>
    <property type="match status" value="1"/>
</dbReference>
<dbReference type="HAMAP" id="MF_00605">
    <property type="entry name" value="TrmD"/>
    <property type="match status" value="1"/>
</dbReference>
<dbReference type="InterPro" id="IPR029028">
    <property type="entry name" value="Alpha/beta_knot_MTases"/>
</dbReference>
<dbReference type="InterPro" id="IPR023148">
    <property type="entry name" value="tRNA_m1G_MeTrfase_C_sf"/>
</dbReference>
<dbReference type="InterPro" id="IPR002649">
    <property type="entry name" value="tRNA_m1G_MeTrfase_TrmD"/>
</dbReference>
<dbReference type="InterPro" id="IPR029026">
    <property type="entry name" value="tRNA_m1G_MTases_N"/>
</dbReference>
<dbReference type="InterPro" id="IPR016009">
    <property type="entry name" value="tRNA_MeTrfase_TRMD/TRM10"/>
</dbReference>
<dbReference type="NCBIfam" id="NF000648">
    <property type="entry name" value="PRK00026.1"/>
    <property type="match status" value="1"/>
</dbReference>
<dbReference type="NCBIfam" id="TIGR00088">
    <property type="entry name" value="trmD"/>
    <property type="match status" value="1"/>
</dbReference>
<dbReference type="PANTHER" id="PTHR46417">
    <property type="entry name" value="TRNA (GUANINE-N(1)-)-METHYLTRANSFERASE"/>
    <property type="match status" value="1"/>
</dbReference>
<dbReference type="PANTHER" id="PTHR46417:SF1">
    <property type="entry name" value="TRNA (GUANINE-N(1)-)-METHYLTRANSFERASE"/>
    <property type="match status" value="1"/>
</dbReference>
<dbReference type="Pfam" id="PF01746">
    <property type="entry name" value="tRNA_m1G_MT"/>
    <property type="match status" value="1"/>
</dbReference>
<dbReference type="PIRSF" id="PIRSF000386">
    <property type="entry name" value="tRNA_mtase"/>
    <property type="match status" value="1"/>
</dbReference>
<dbReference type="SUPFAM" id="SSF75217">
    <property type="entry name" value="alpha/beta knot"/>
    <property type="match status" value="1"/>
</dbReference>
<protein>
    <recommendedName>
        <fullName evidence="1">tRNA (guanine-N(1)-)-methyltransferase</fullName>
        <ecNumber evidence="1">2.1.1.228</ecNumber>
    </recommendedName>
    <alternativeName>
        <fullName evidence="1">M1G-methyltransferase</fullName>
    </alternativeName>
    <alternativeName>
        <fullName evidence="1">tRNA [GM37] methyltransferase</fullName>
    </alternativeName>
</protein>
<accession>Q48U55</accession>
<reference key="1">
    <citation type="journal article" date="2005" name="J. Infect. Dis.">
        <title>Genome sequence of a serotype M28 strain of group A Streptococcus: potential new insights into puerperal sepsis and bacterial disease specificity.</title>
        <authorList>
            <person name="Green N.M."/>
            <person name="Zhang S."/>
            <person name="Porcella S.F."/>
            <person name="Nagiec M.J."/>
            <person name="Barbian K.D."/>
            <person name="Beres S.B."/>
            <person name="Lefebvre R.B."/>
            <person name="Musser J.M."/>
        </authorList>
    </citation>
    <scope>NUCLEOTIDE SEQUENCE [LARGE SCALE GENOMIC DNA]</scope>
    <source>
        <strain>MGAS6180</strain>
    </source>
</reference>
<name>TRMD_STRPM</name>